<feature type="signal peptide" evidence="3">
    <location>
        <begin position="1"/>
        <end position="31"/>
    </location>
</feature>
<feature type="chain" id="PRO_0000312828" description="Bursicon" evidence="3">
    <location>
        <begin position="32"/>
        <end position="171"/>
    </location>
</feature>
<feature type="domain" description="CTCK" evidence="4">
    <location>
        <begin position="47"/>
        <end position="137"/>
    </location>
</feature>
<feature type="disulfide bond" evidence="4">
    <location>
        <begin position="47"/>
        <end position="96"/>
    </location>
</feature>
<feature type="disulfide bond" evidence="4">
    <location>
        <begin position="61"/>
        <end position="110"/>
    </location>
</feature>
<feature type="disulfide bond" evidence="4">
    <location>
        <begin position="71"/>
        <end position="131"/>
    </location>
</feature>
<feature type="disulfide bond" evidence="4">
    <location>
        <begin position="75"/>
        <end position="133"/>
    </location>
</feature>
<feature type="disulfide bond" evidence="4">
    <location>
        <begin position="93"/>
        <end position="136"/>
    </location>
</feature>
<feature type="disulfide bond" description="Interchain" evidence="4">
    <location>
        <position position="95"/>
    </location>
</feature>
<comment type="function">
    <text evidence="2">Final heterodimeric neurohormone released at the end of the molting cycle, involved in the sclerotization (tanning) of the insect cuticle, melanization and wing spreading.</text>
</comment>
<comment type="subunit">
    <text evidence="2">Heterodimer of burs and pburs.</text>
</comment>
<comment type="subcellular location">
    <subcellularLocation>
        <location evidence="2">Secreted</location>
    </subcellularLocation>
</comment>
<comment type="miscellaneous">
    <text evidence="5">The bursicon gene is encoded by two loci: burs124 contains exons 1, 2 and 4, and burs3 contains exon 3. Exon 3 is trans-spliced into position in the mature transcript. This unusual gene arrangement has existed for at least the 150 million years (MY) of mosquito evolution since the split of the culicid and anophelid family lineages, but is younger than the 250 MY split of the dipteran suborders Nematocera and Brachycera (containing the Culicidea and Drosophilidae, respectively).</text>
</comment>
<organism>
    <name type="scientific">Culex pipiens pipiens</name>
    <name type="common">Northern house mosquito</name>
    <dbReference type="NCBI Taxonomy" id="38569"/>
    <lineage>
        <taxon>Eukaryota</taxon>
        <taxon>Metazoa</taxon>
        <taxon>Ecdysozoa</taxon>
        <taxon>Arthropoda</taxon>
        <taxon>Hexapoda</taxon>
        <taxon>Insecta</taxon>
        <taxon>Pterygota</taxon>
        <taxon>Neoptera</taxon>
        <taxon>Endopterygota</taxon>
        <taxon>Diptera</taxon>
        <taxon>Nematocera</taxon>
        <taxon>Culicoidea</taxon>
        <taxon>Culicidae</taxon>
        <taxon>Culicinae</taxon>
        <taxon>Culicini</taxon>
        <taxon>Culex</taxon>
        <taxon>Culex</taxon>
    </lineage>
</organism>
<keyword id="KW-1015">Disulfide bond</keyword>
<keyword id="KW-0372">Hormone</keyword>
<keyword id="KW-0964">Secreted</keyword>
<keyword id="KW-0732">Signal</keyword>
<evidence type="ECO:0000250" key="1">
    <source>
        <dbReference type="UniProtKB" id="Q66Q82"/>
    </source>
</evidence>
<evidence type="ECO:0000250" key="2">
    <source>
        <dbReference type="UniProtKB" id="Q9VD83"/>
    </source>
</evidence>
<evidence type="ECO:0000255" key="3"/>
<evidence type="ECO:0000255" key="4">
    <source>
        <dbReference type="PROSITE-ProRule" id="PRU00039"/>
    </source>
</evidence>
<evidence type="ECO:0000269" key="5">
    <source>
    </source>
</evidence>
<evidence type="ECO:0000305" key="6"/>
<accession>P85315</accession>
<reference evidence="6" key="1">
    <citation type="journal article" date="2007" name="Genetics">
        <title>The bursicon gene in mosquitoes: an unusual example of mRNA trans-splicing.</title>
        <authorList>
            <person name="Robertson H.M."/>
            <person name="Navik J.A."/>
            <person name="Walden K.K.O."/>
            <person name="Honegger H.-W."/>
        </authorList>
    </citation>
    <scope>CONCEPTUAL TRANSLATION</scope>
    <scope>TRANS-SPLICING</scope>
</reference>
<protein>
    <recommendedName>
        <fullName>Bursicon</fullName>
    </recommendedName>
    <alternativeName>
        <fullName>Bursicon subunit alpha</fullName>
    </alternativeName>
</protein>
<sequence length="171" mass="18431">MISSPSTPATFAAGSLVLLCLVLGGGHFALAQKEGNDDIQHYTADDCQVTPVIHVLQYPGCVPKPIPSFACVGRCASYIQVSGSKIWQMERSCMCCQESGEREASVSLFCPKAKNGEKKFKKVSTKAPLECMCRPCTGIEDANVIPQELAAFADDGTLTSYFQKGQLRNSE</sequence>
<proteinExistence type="inferred from homology"/>
<name>BURS_CULPP</name>
<gene>
    <name evidence="1" type="primary">burs124</name>
</gene>
<gene>
    <name evidence="1" type="primary">burs3</name>
</gene>
<dbReference type="GO" id="GO:0005576">
    <property type="term" value="C:extracellular region"/>
    <property type="evidence" value="ECO:0000250"/>
    <property type="project" value="UniProtKB"/>
</dbReference>
<dbReference type="GO" id="GO:0005615">
    <property type="term" value="C:extracellular space"/>
    <property type="evidence" value="ECO:0007669"/>
    <property type="project" value="TreeGrafter"/>
</dbReference>
<dbReference type="GO" id="GO:0036122">
    <property type="term" value="F:BMP binding"/>
    <property type="evidence" value="ECO:0007669"/>
    <property type="project" value="TreeGrafter"/>
</dbReference>
<dbReference type="GO" id="GO:0005179">
    <property type="term" value="F:hormone activity"/>
    <property type="evidence" value="ECO:0000250"/>
    <property type="project" value="UniProtKB"/>
</dbReference>
<dbReference type="GO" id="GO:0009887">
    <property type="term" value="P:animal organ morphogenesis"/>
    <property type="evidence" value="ECO:0007669"/>
    <property type="project" value="TreeGrafter"/>
</dbReference>
<dbReference type="GO" id="GO:0007593">
    <property type="term" value="P:chitin-based cuticle sclerotization"/>
    <property type="evidence" value="ECO:0000250"/>
    <property type="project" value="UniProtKB"/>
</dbReference>
<dbReference type="GO" id="GO:0048067">
    <property type="term" value="P:cuticle pigmentation"/>
    <property type="evidence" value="ECO:0000250"/>
    <property type="project" value="UniProtKB"/>
</dbReference>
<dbReference type="GO" id="GO:0038098">
    <property type="term" value="P:sequestering of BMP from receptor via BMP binding"/>
    <property type="evidence" value="ECO:0007669"/>
    <property type="project" value="TreeGrafter"/>
</dbReference>
<dbReference type="FunFam" id="2.10.90.10:FF:000054">
    <property type="entry name" value="Bursicon"/>
    <property type="match status" value="1"/>
</dbReference>
<dbReference type="Gene3D" id="2.10.90.10">
    <property type="entry name" value="Cystine-knot cytokines"/>
    <property type="match status" value="1"/>
</dbReference>
<dbReference type="InterPro" id="IPR006207">
    <property type="entry name" value="Cys_knot_C"/>
</dbReference>
<dbReference type="InterPro" id="IPR029034">
    <property type="entry name" value="Cystine-knot_cytokine"/>
</dbReference>
<dbReference type="InterPro" id="IPR004133">
    <property type="entry name" value="DAN"/>
</dbReference>
<dbReference type="PANTHER" id="PTHR15283:SF7">
    <property type="entry name" value="BURSICON"/>
    <property type="match status" value="1"/>
</dbReference>
<dbReference type="PANTHER" id="PTHR15283">
    <property type="entry name" value="GREMLIN 1"/>
    <property type="match status" value="1"/>
</dbReference>
<dbReference type="Pfam" id="PF03045">
    <property type="entry name" value="DAN"/>
    <property type="match status" value="1"/>
</dbReference>
<dbReference type="SMART" id="SM00041">
    <property type="entry name" value="CT"/>
    <property type="match status" value="1"/>
</dbReference>
<dbReference type="PROSITE" id="PS01225">
    <property type="entry name" value="CTCK_2"/>
    <property type="match status" value="1"/>
</dbReference>